<gene>
    <name evidence="1" type="primary">rnz</name>
    <name type="ordered locus">BCB4264_A4250</name>
</gene>
<name>RNZ_BACC4</name>
<feature type="chain" id="PRO_1000187933" description="Ribonuclease Z">
    <location>
        <begin position="1"/>
        <end position="307"/>
    </location>
</feature>
<feature type="active site" description="Proton acceptor" evidence="1">
    <location>
        <position position="67"/>
    </location>
</feature>
<feature type="binding site" evidence="1">
    <location>
        <position position="63"/>
    </location>
    <ligand>
        <name>Zn(2+)</name>
        <dbReference type="ChEBI" id="CHEBI:29105"/>
        <label>1</label>
        <note>catalytic</note>
    </ligand>
</feature>
<feature type="binding site" evidence="1">
    <location>
        <position position="65"/>
    </location>
    <ligand>
        <name>Zn(2+)</name>
        <dbReference type="ChEBI" id="CHEBI:29105"/>
        <label>1</label>
        <note>catalytic</note>
    </ligand>
</feature>
<feature type="binding site" evidence="1">
    <location>
        <position position="67"/>
    </location>
    <ligand>
        <name>Zn(2+)</name>
        <dbReference type="ChEBI" id="CHEBI:29105"/>
        <label>2</label>
        <note>catalytic</note>
    </ligand>
</feature>
<feature type="binding site" evidence="1">
    <location>
        <position position="68"/>
    </location>
    <ligand>
        <name>Zn(2+)</name>
        <dbReference type="ChEBI" id="CHEBI:29105"/>
        <label>2</label>
        <note>catalytic</note>
    </ligand>
</feature>
<feature type="binding site" evidence="1">
    <location>
        <position position="141"/>
    </location>
    <ligand>
        <name>Zn(2+)</name>
        <dbReference type="ChEBI" id="CHEBI:29105"/>
        <label>1</label>
        <note>catalytic</note>
    </ligand>
</feature>
<feature type="binding site" evidence="1">
    <location>
        <position position="212"/>
    </location>
    <ligand>
        <name>Zn(2+)</name>
        <dbReference type="ChEBI" id="CHEBI:29105"/>
        <label>1</label>
        <note>catalytic</note>
    </ligand>
</feature>
<feature type="binding site" evidence="1">
    <location>
        <position position="212"/>
    </location>
    <ligand>
        <name>Zn(2+)</name>
        <dbReference type="ChEBI" id="CHEBI:29105"/>
        <label>2</label>
        <note>catalytic</note>
    </ligand>
</feature>
<feature type="binding site" evidence="1">
    <location>
        <position position="270"/>
    </location>
    <ligand>
        <name>Zn(2+)</name>
        <dbReference type="ChEBI" id="CHEBI:29105"/>
        <label>2</label>
        <note>catalytic</note>
    </ligand>
</feature>
<reference key="1">
    <citation type="submission" date="2008-10" db="EMBL/GenBank/DDBJ databases">
        <title>Genome sequence of Bacillus cereus B4264.</title>
        <authorList>
            <person name="Dodson R.J."/>
            <person name="Durkin A.S."/>
            <person name="Rosovitz M.J."/>
            <person name="Rasko D.A."/>
            <person name="Hoffmaster A."/>
            <person name="Ravel J."/>
            <person name="Sutton G."/>
        </authorList>
    </citation>
    <scope>NUCLEOTIDE SEQUENCE [LARGE SCALE GENOMIC DNA]</scope>
    <source>
        <strain>B4264</strain>
    </source>
</reference>
<accession>B7HB12</accession>
<dbReference type="EC" id="3.1.26.11" evidence="1"/>
<dbReference type="EMBL" id="CP001176">
    <property type="protein sequence ID" value="ACK60027.1"/>
    <property type="molecule type" value="Genomic_DNA"/>
</dbReference>
<dbReference type="RefSeq" id="WP_000397437.1">
    <property type="nucleotide sequence ID" value="NC_011725.1"/>
</dbReference>
<dbReference type="SMR" id="B7HB12"/>
<dbReference type="KEGG" id="bcb:BCB4264_A4250"/>
<dbReference type="HOGENOM" id="CLU_031317_2_0_9"/>
<dbReference type="Proteomes" id="UP000007096">
    <property type="component" value="Chromosome"/>
</dbReference>
<dbReference type="GO" id="GO:0042781">
    <property type="term" value="F:3'-tRNA processing endoribonuclease activity"/>
    <property type="evidence" value="ECO:0007669"/>
    <property type="project" value="UniProtKB-UniRule"/>
</dbReference>
<dbReference type="GO" id="GO:0008270">
    <property type="term" value="F:zinc ion binding"/>
    <property type="evidence" value="ECO:0007669"/>
    <property type="project" value="UniProtKB-UniRule"/>
</dbReference>
<dbReference type="CDD" id="cd07717">
    <property type="entry name" value="RNaseZ_ZiPD-like_MBL-fold"/>
    <property type="match status" value="1"/>
</dbReference>
<dbReference type="FunFam" id="3.60.15.10:FF:000002">
    <property type="entry name" value="Ribonuclease Z"/>
    <property type="match status" value="1"/>
</dbReference>
<dbReference type="Gene3D" id="3.60.15.10">
    <property type="entry name" value="Ribonuclease Z/Hydroxyacylglutathione hydrolase-like"/>
    <property type="match status" value="1"/>
</dbReference>
<dbReference type="HAMAP" id="MF_01818">
    <property type="entry name" value="RNase_Z_BN"/>
    <property type="match status" value="1"/>
</dbReference>
<dbReference type="InterPro" id="IPR001279">
    <property type="entry name" value="Metallo-B-lactamas"/>
</dbReference>
<dbReference type="InterPro" id="IPR036866">
    <property type="entry name" value="RibonucZ/Hydroxyglut_hydro"/>
</dbReference>
<dbReference type="InterPro" id="IPR013471">
    <property type="entry name" value="RNase_Z/BN"/>
</dbReference>
<dbReference type="NCBIfam" id="NF000800">
    <property type="entry name" value="PRK00055.1-1"/>
    <property type="match status" value="1"/>
</dbReference>
<dbReference type="NCBIfam" id="NF000801">
    <property type="entry name" value="PRK00055.1-3"/>
    <property type="match status" value="1"/>
</dbReference>
<dbReference type="NCBIfam" id="TIGR02651">
    <property type="entry name" value="RNase_Z"/>
    <property type="match status" value="1"/>
</dbReference>
<dbReference type="PANTHER" id="PTHR46018">
    <property type="entry name" value="ZINC PHOSPHODIESTERASE ELAC PROTEIN 1"/>
    <property type="match status" value="1"/>
</dbReference>
<dbReference type="PANTHER" id="PTHR46018:SF2">
    <property type="entry name" value="ZINC PHOSPHODIESTERASE ELAC PROTEIN 1"/>
    <property type="match status" value="1"/>
</dbReference>
<dbReference type="Pfam" id="PF00753">
    <property type="entry name" value="Lactamase_B"/>
    <property type="match status" value="1"/>
</dbReference>
<dbReference type="Pfam" id="PF12706">
    <property type="entry name" value="Lactamase_B_2"/>
    <property type="match status" value="1"/>
</dbReference>
<dbReference type="SMART" id="SM00849">
    <property type="entry name" value="Lactamase_B"/>
    <property type="match status" value="1"/>
</dbReference>
<dbReference type="SUPFAM" id="SSF56281">
    <property type="entry name" value="Metallo-hydrolase/oxidoreductase"/>
    <property type="match status" value="1"/>
</dbReference>
<comment type="function">
    <text evidence="1">Zinc phosphodiesterase, which displays some tRNA 3'-processing endonuclease activity. Probably involved in tRNA maturation, by removing a 3'-trailer from precursor tRNA.</text>
</comment>
<comment type="catalytic activity">
    <reaction evidence="1">
        <text>Endonucleolytic cleavage of RNA, removing extra 3' nucleotides from tRNA precursor, generating 3' termini of tRNAs. A 3'-hydroxy group is left at the tRNA terminus and a 5'-phosphoryl group is left at the trailer molecule.</text>
        <dbReference type="EC" id="3.1.26.11"/>
    </reaction>
</comment>
<comment type="cofactor">
    <cofactor evidence="1">
        <name>Zn(2+)</name>
        <dbReference type="ChEBI" id="CHEBI:29105"/>
    </cofactor>
    <text evidence="1">Binds 2 Zn(2+) ions.</text>
</comment>
<comment type="subunit">
    <text evidence="1">Homodimer.</text>
</comment>
<comment type="similarity">
    <text evidence="1">Belongs to the RNase Z family.</text>
</comment>
<evidence type="ECO:0000255" key="1">
    <source>
        <dbReference type="HAMAP-Rule" id="MF_01818"/>
    </source>
</evidence>
<sequence length="307" mass="34239">MEFVFLGTGAGVPSKGRNVSAIALQLLEERGQTWLFDCGEATQHQILHTSVRPRRIEKIFITHLHGDHIFGLPGLLGSRSFQGGTTPLKVYGPKGIKQFIEVALSVSTTHVKYPLEVVEITEEGTVFEDNEFYVETKRLSHGIECFGYRIVEKDIQGALLVDKLLEMGVKPGPIFKRLKDGEVVELEDGTILNGNEFIGPPQKGRIITILGDTRYCEASRELAQDADVLVHEATFAAEDEQQAYDYFHSTSKQAASIALQANAKRLILTHISSRYQGDTYKELLKEARELFSNTEIATDLKSFPVEK</sequence>
<proteinExistence type="inferred from homology"/>
<keyword id="KW-0255">Endonuclease</keyword>
<keyword id="KW-0378">Hydrolase</keyword>
<keyword id="KW-0479">Metal-binding</keyword>
<keyword id="KW-0540">Nuclease</keyword>
<keyword id="KW-0819">tRNA processing</keyword>
<keyword id="KW-0862">Zinc</keyword>
<protein>
    <recommendedName>
        <fullName evidence="1">Ribonuclease Z</fullName>
        <shortName evidence="1">RNase Z</shortName>
        <ecNumber evidence="1">3.1.26.11</ecNumber>
    </recommendedName>
    <alternativeName>
        <fullName evidence="1">tRNA 3 endonuclease</fullName>
    </alternativeName>
    <alternativeName>
        <fullName evidence="1">tRNase Z</fullName>
    </alternativeName>
</protein>
<organism>
    <name type="scientific">Bacillus cereus (strain B4264)</name>
    <dbReference type="NCBI Taxonomy" id="405532"/>
    <lineage>
        <taxon>Bacteria</taxon>
        <taxon>Bacillati</taxon>
        <taxon>Bacillota</taxon>
        <taxon>Bacilli</taxon>
        <taxon>Bacillales</taxon>
        <taxon>Bacillaceae</taxon>
        <taxon>Bacillus</taxon>
        <taxon>Bacillus cereus group</taxon>
    </lineage>
</organism>